<gene>
    <name evidence="9" type="primary">VPS35L</name>
    <name evidence="9" type="synonym">C16orf62</name>
    <name type="ORF">101F10.2</name>
</gene>
<sequence>MAVFPWHSRNRNYKAEFASCRLEAVPLEFGDYHPLKPITVTESKTKKVNRKGSTSSTSSSSSSSVVDPLSSVLDGTDPLSMFAATADPAALAAAMDSSRRKRDRDDNSVVGSDFEPWTNKRGEILARYTTTEKLSINLFMGSEKGKAGTATLAMSEKVRTRLEELDDFEEGSQKELLNLTQQDYVNRIEELNQSLKDAWASDQKVKALKIVIQCSKLLSDTSVIQFYPSKFVLITDILDTFGKLVYERIFSMCVDSRSVLPDHFSPENANDTAKETCLNWFFKIASIRELIPRFYVEASILKCNKFLSKTGISECLPRLTCMIRGIGDPLVSVYARAYLCRVGMEVAPHLKETLNKNFFDFLLTFKQIHGDTVQNQLVVQGVELPSYLPLYPPAMDWIFQCISYHAPEALLTEMMERCKKLGNNALLLNSVMSAFRAEFIATRSMDFIGMIKECDESGFPKHLLFRSLGLNLALADPPESDRLQILNEAWKVITKLKNPQDYINCAEVWVEYTCKHFTKREVNTVLADVIKHMTPDRAFEDSYPQLQLIIKKVIAHFHDFSVLFSVEKFLPFLDMFQKESVRVEVCKCIMDAFIKHQQEPTKDPVILNALLHVCKTMHDSVNALTLEDEKRMLSYLINGFIKMVSFGRDFEQQLSFYVESRSMFCNLEPVLVQLIHSVNRLAMETRKVMKGNHSRKTAAFVRACVAYCFITIPSLAGIFTRLNLYLHSGQVALANQCLSQADAFFKAAISLVPEVPKMINIDGKMRPSESFLLEFLCNFFSTLLIVPDHPEHGVLFLVRELLNVIQDYTWEDNSDEKIRIYTCVLHLLSAMSQETYLYHIDKVDSNDSLYGGDSKFLAENNKLCETVMAQILEHLKTLAKDEALKRQSSLGLSFFNSILAHGDLRNNKLNQLSVNLWHLAQRHGCADTRTMVKTLEYIKKQSKQPDMTHLTELALRLPLQTRT</sequence>
<reference key="1">
    <citation type="submission" date="2002-02" db="EMBL/GenBank/DDBJ databases">
        <authorList>
            <person name="Lu J."/>
            <person name="Liu Z."/>
            <person name="Hu G."/>
            <person name="Wu M."/>
            <person name="Wang X."/>
        </authorList>
    </citation>
    <scope>NUCLEOTIDE SEQUENCE [MRNA] (ISOFORM 2)</scope>
</reference>
<reference key="2">
    <citation type="journal article" date="2004" name="Nat. Genet.">
        <title>Complete sequencing and characterization of 21,243 full-length human cDNAs.</title>
        <authorList>
            <person name="Ota T."/>
            <person name="Suzuki Y."/>
            <person name="Nishikawa T."/>
            <person name="Otsuki T."/>
            <person name="Sugiyama T."/>
            <person name="Irie R."/>
            <person name="Wakamatsu A."/>
            <person name="Hayashi K."/>
            <person name="Sato H."/>
            <person name="Nagai K."/>
            <person name="Kimura K."/>
            <person name="Makita H."/>
            <person name="Sekine M."/>
            <person name="Obayashi M."/>
            <person name="Nishi T."/>
            <person name="Shibahara T."/>
            <person name="Tanaka T."/>
            <person name="Ishii S."/>
            <person name="Yamamoto J."/>
            <person name="Saito K."/>
            <person name="Kawai Y."/>
            <person name="Isono Y."/>
            <person name="Nakamura Y."/>
            <person name="Nagahari K."/>
            <person name="Murakami K."/>
            <person name="Yasuda T."/>
            <person name="Iwayanagi T."/>
            <person name="Wagatsuma M."/>
            <person name="Shiratori A."/>
            <person name="Sudo H."/>
            <person name="Hosoiri T."/>
            <person name="Kaku Y."/>
            <person name="Kodaira H."/>
            <person name="Kondo H."/>
            <person name="Sugawara M."/>
            <person name="Takahashi M."/>
            <person name="Kanda K."/>
            <person name="Yokoi T."/>
            <person name="Furuya T."/>
            <person name="Kikkawa E."/>
            <person name="Omura Y."/>
            <person name="Abe K."/>
            <person name="Kamihara K."/>
            <person name="Katsuta N."/>
            <person name="Sato K."/>
            <person name="Tanikawa M."/>
            <person name="Yamazaki M."/>
            <person name="Ninomiya K."/>
            <person name="Ishibashi T."/>
            <person name="Yamashita H."/>
            <person name="Murakawa K."/>
            <person name="Fujimori K."/>
            <person name="Tanai H."/>
            <person name="Kimata M."/>
            <person name="Watanabe M."/>
            <person name="Hiraoka S."/>
            <person name="Chiba Y."/>
            <person name="Ishida S."/>
            <person name="Ono Y."/>
            <person name="Takiguchi S."/>
            <person name="Watanabe S."/>
            <person name="Yosida M."/>
            <person name="Hotuta T."/>
            <person name="Kusano J."/>
            <person name="Kanehori K."/>
            <person name="Takahashi-Fujii A."/>
            <person name="Hara H."/>
            <person name="Tanase T.-O."/>
            <person name="Nomura Y."/>
            <person name="Togiya S."/>
            <person name="Komai F."/>
            <person name="Hara R."/>
            <person name="Takeuchi K."/>
            <person name="Arita M."/>
            <person name="Imose N."/>
            <person name="Musashino K."/>
            <person name="Yuuki H."/>
            <person name="Oshima A."/>
            <person name="Sasaki N."/>
            <person name="Aotsuka S."/>
            <person name="Yoshikawa Y."/>
            <person name="Matsunawa H."/>
            <person name="Ichihara T."/>
            <person name="Shiohata N."/>
            <person name="Sano S."/>
            <person name="Moriya S."/>
            <person name="Momiyama H."/>
            <person name="Satoh N."/>
            <person name="Takami S."/>
            <person name="Terashima Y."/>
            <person name="Suzuki O."/>
            <person name="Nakagawa S."/>
            <person name="Senoh A."/>
            <person name="Mizoguchi H."/>
            <person name="Goto Y."/>
            <person name="Shimizu F."/>
            <person name="Wakebe H."/>
            <person name="Hishigaki H."/>
            <person name="Watanabe T."/>
            <person name="Sugiyama A."/>
            <person name="Takemoto M."/>
            <person name="Kawakami B."/>
            <person name="Yamazaki M."/>
            <person name="Watanabe K."/>
            <person name="Kumagai A."/>
            <person name="Itakura S."/>
            <person name="Fukuzumi Y."/>
            <person name="Fujimori Y."/>
            <person name="Komiyama M."/>
            <person name="Tashiro H."/>
            <person name="Tanigami A."/>
            <person name="Fujiwara T."/>
            <person name="Ono T."/>
            <person name="Yamada K."/>
            <person name="Fujii Y."/>
            <person name="Ozaki K."/>
            <person name="Hirao M."/>
            <person name="Ohmori Y."/>
            <person name="Kawabata A."/>
            <person name="Hikiji T."/>
            <person name="Kobatake N."/>
            <person name="Inagaki H."/>
            <person name="Ikema Y."/>
            <person name="Okamoto S."/>
            <person name="Okitani R."/>
            <person name="Kawakami T."/>
            <person name="Noguchi S."/>
            <person name="Itoh T."/>
            <person name="Shigeta K."/>
            <person name="Senba T."/>
            <person name="Matsumura K."/>
            <person name="Nakajima Y."/>
            <person name="Mizuno T."/>
            <person name="Morinaga M."/>
            <person name="Sasaki M."/>
            <person name="Togashi T."/>
            <person name="Oyama M."/>
            <person name="Hata H."/>
            <person name="Watanabe M."/>
            <person name="Komatsu T."/>
            <person name="Mizushima-Sugano J."/>
            <person name="Satoh T."/>
            <person name="Shirai Y."/>
            <person name="Takahashi Y."/>
            <person name="Nakagawa K."/>
            <person name="Okumura K."/>
            <person name="Nagase T."/>
            <person name="Nomura N."/>
            <person name="Kikuchi H."/>
            <person name="Masuho Y."/>
            <person name="Yamashita R."/>
            <person name="Nakai K."/>
            <person name="Yada T."/>
            <person name="Nakamura Y."/>
            <person name="Ohara O."/>
            <person name="Isogai T."/>
            <person name="Sugano S."/>
        </authorList>
    </citation>
    <scope>NUCLEOTIDE SEQUENCE [LARGE SCALE MRNA]</scope>
    <source>
        <tissue>Tongue</tissue>
    </source>
</reference>
<reference key="3">
    <citation type="journal article" date="2007" name="BMC Genomics">
        <title>The full-ORF clone resource of the German cDNA consortium.</title>
        <authorList>
            <person name="Bechtel S."/>
            <person name="Rosenfelder H."/>
            <person name="Duda A."/>
            <person name="Schmidt C.P."/>
            <person name="Ernst U."/>
            <person name="Wellenreuther R."/>
            <person name="Mehrle A."/>
            <person name="Schuster C."/>
            <person name="Bahr A."/>
            <person name="Bloecker H."/>
            <person name="Heubner D."/>
            <person name="Hoerlein A."/>
            <person name="Michel G."/>
            <person name="Wedler H."/>
            <person name="Koehrer K."/>
            <person name="Ottenwaelder B."/>
            <person name="Poustka A."/>
            <person name="Wiemann S."/>
            <person name="Schupp I."/>
        </authorList>
    </citation>
    <scope>NUCLEOTIDE SEQUENCE [LARGE SCALE MRNA] (ISOFORM 1)</scope>
    <source>
        <tissue>Heart</tissue>
    </source>
</reference>
<reference key="4">
    <citation type="journal article" date="2004" name="Genome Res.">
        <title>The status, quality, and expansion of the NIH full-length cDNA project: the Mammalian Gene Collection (MGC).</title>
        <authorList>
            <consortium name="The MGC Project Team"/>
        </authorList>
    </citation>
    <scope>NUCLEOTIDE SEQUENCE [LARGE SCALE MRNA] (ISOFORM 1)</scope>
    <scope>VARIANTS CYS-32 AND VAL-506</scope>
    <source>
        <tissue>Pancreas</tissue>
        <tissue>Uterus</tissue>
    </source>
</reference>
<reference key="5">
    <citation type="journal article" date="2001" name="Genome Res.">
        <title>Towards a catalog of human genes and proteins: sequencing and analysis of 500 novel complete protein coding human cDNAs.</title>
        <authorList>
            <person name="Wiemann S."/>
            <person name="Weil B."/>
            <person name="Wellenreuther R."/>
            <person name="Gassenhuber J."/>
            <person name="Glassl S."/>
            <person name="Ansorge W."/>
            <person name="Boecher M."/>
            <person name="Bloecker H."/>
            <person name="Bauersachs S."/>
            <person name="Blum H."/>
            <person name="Lauber J."/>
            <person name="Duesterhoeft A."/>
            <person name="Beyer A."/>
            <person name="Koehrer K."/>
            <person name="Strack N."/>
            <person name="Mewes H.-W."/>
            <person name="Ottenwaelder B."/>
            <person name="Obermaier B."/>
            <person name="Tampe J."/>
            <person name="Heubner D."/>
            <person name="Wambutt R."/>
            <person name="Korn B."/>
            <person name="Klein M."/>
            <person name="Poustka A."/>
        </authorList>
    </citation>
    <scope>NUCLEOTIDE SEQUENCE [LARGE SCALE MRNA] OF 396-963 (ISOFORM 1)</scope>
    <source>
        <tissue>Testis</tissue>
    </source>
</reference>
<reference key="6">
    <citation type="journal article" date="1999" name="Genomics">
        <title>Genome duplications and other features in 12 Mb of DNA sequence from human chromosome 16p and 16q.</title>
        <authorList>
            <person name="Loftus B.J."/>
            <person name="Kim U.-J."/>
            <person name="Sneddon V.P."/>
            <person name="Kalush F."/>
            <person name="Brandon R."/>
            <person name="Fuhrmann J."/>
            <person name="Mason T."/>
            <person name="Crosby M.L."/>
            <person name="Barnstead M."/>
            <person name="Cronin L."/>
            <person name="Mays A.D."/>
            <person name="Cao Y."/>
            <person name="Xu R.X."/>
            <person name="Kang H.-L."/>
            <person name="Mitchell S."/>
            <person name="Eichler E.E."/>
            <person name="Harris P.C."/>
            <person name="Venter J.C."/>
            <person name="Adams M.D."/>
        </authorList>
    </citation>
    <scope>NUCLEOTIDE SEQUENCE [LARGE SCALE GENOMIC DNA] OF 758-963</scope>
</reference>
<reference key="7">
    <citation type="journal article" date="2011" name="BMC Syst. Biol.">
        <title>Initial characterization of the human central proteome.</title>
        <authorList>
            <person name="Burkard T.R."/>
            <person name="Planyavsky M."/>
            <person name="Kaupe I."/>
            <person name="Breitwieser F.P."/>
            <person name="Buerckstuemmer T."/>
            <person name="Bennett K.L."/>
            <person name="Superti-Furga G."/>
            <person name="Colinge J."/>
        </authorList>
    </citation>
    <scope>IDENTIFICATION BY MASS SPECTROMETRY [LARGE SCALE ANALYSIS]</scope>
</reference>
<reference key="8">
    <citation type="journal article" date="2013" name="J. Proteome Res.">
        <title>Toward a comprehensive characterization of a human cancer cell phosphoproteome.</title>
        <authorList>
            <person name="Zhou H."/>
            <person name="Di Palma S."/>
            <person name="Preisinger C."/>
            <person name="Peng M."/>
            <person name="Polat A.N."/>
            <person name="Heck A.J."/>
            <person name="Mohammed S."/>
        </authorList>
    </citation>
    <scope>PHOSPHORYLATION [LARGE SCALE ANALYSIS] AT SER-265</scope>
    <scope>IDENTIFICATION BY MASS SPECTROMETRY [LARGE SCALE ANALYSIS]</scope>
    <source>
        <tissue>Erythroleukemia</tissue>
    </source>
</reference>
<reference key="9">
    <citation type="journal article" date="2015" name="Mol. Biol. Cell">
        <title>COMMD1 is linked to the WASH complex and regulates endosomal trafficking of the copper transporter ATP7A.</title>
        <authorList>
            <person name="Phillips-Krawczak C.A."/>
            <person name="Singla A."/>
            <person name="Starokadomskyy P."/>
            <person name="Deng Z."/>
            <person name="Osborne D.G."/>
            <person name="Li H."/>
            <person name="Dick C.J."/>
            <person name="Gomez T.S."/>
            <person name="Koenecke M."/>
            <person name="Zhang J.S."/>
            <person name="Dai H."/>
            <person name="Sifuentes-Dominguez L.F."/>
            <person name="Geng L.N."/>
            <person name="Kaufmann S.H."/>
            <person name="Hein M.Y."/>
            <person name="Wallis M."/>
            <person name="McGaughran J."/>
            <person name="Gecz J."/>
            <person name="van de Sluis B."/>
            <person name="Billadeau D.D."/>
            <person name="Burstein E."/>
        </authorList>
    </citation>
    <scope>FUNCTION</scope>
    <scope>IDENTIFICATION IN THE CCC COMPLEX</scope>
    <scope>SUBCELLULAR LOCATION</scope>
    <scope>SUBUNIT</scope>
</reference>
<reference key="10">
    <citation type="journal article" date="2015" name="Proteomics">
        <title>N-terminome analysis of the human mitochondrial proteome.</title>
        <authorList>
            <person name="Vaca Jacome A.S."/>
            <person name="Rabilloud T."/>
            <person name="Schaeffer-Reiss C."/>
            <person name="Rompais M."/>
            <person name="Ayoub D."/>
            <person name="Lane L."/>
            <person name="Bairoch A."/>
            <person name="Van Dorsselaer A."/>
            <person name="Carapito C."/>
        </authorList>
    </citation>
    <scope>IDENTIFICATION BY MASS SPECTROMETRY [LARGE SCALE ANALYSIS]</scope>
</reference>
<reference key="11">
    <citation type="journal article" date="2017" name="Nat. Cell Biol.">
        <title>Retriever is a multiprotein complex for retromer-independent endosomal cargo recycling.</title>
        <authorList>
            <person name="McNally K.E."/>
            <person name="Faulkner R."/>
            <person name="Steinberg F."/>
            <person name="Gallon M."/>
            <person name="Ghai R."/>
            <person name="Pim D."/>
            <person name="Langton P."/>
            <person name="Pearson N."/>
            <person name="Danson C.M."/>
            <person name="Naegele H."/>
            <person name="Morris L.L."/>
            <person name="Singla A."/>
            <person name="Overlee B.L."/>
            <person name="Heesom K.J."/>
            <person name="Sessions R."/>
            <person name="Banks L."/>
            <person name="Collins B.M."/>
            <person name="Berger I."/>
            <person name="Billadeau D.D."/>
            <person name="Burstein E."/>
            <person name="Cullen P.J."/>
        </authorList>
    </citation>
    <scope>FUNCTION</scope>
    <scope>INTERACTION WITH CCDC22; SNX17 AND SNX31</scope>
    <scope>IDENTIFICATION IN THE RETRIEVER COMPLEX</scope>
    <scope>SUBCELLULAR LOCATION</scope>
    <scope>FUNCTION (MICROBIAL INFECTION)</scope>
</reference>
<reference key="12">
    <citation type="journal article" date="2020" name="J. Med. Genet.">
        <title>Biallelic VPS35L pathogenic variants cause 3C/Ritscher-Schinzel-like syndrome through dysfunction of retriever complex.</title>
        <authorList>
            <person name="Kato K."/>
            <person name="Oka Y."/>
            <person name="Muramatsu H."/>
            <person name="Vasilev F.F."/>
            <person name="Otomo T."/>
            <person name="Oishi H."/>
            <person name="Kawano Y."/>
            <person name="Kidokoro H."/>
            <person name="Nakazawa Y."/>
            <person name="Ogi T."/>
            <person name="Takahashi Y."/>
            <person name="Saitoh S."/>
        </authorList>
    </citation>
    <scope>INTERACTION WITH VPS29</scope>
    <scope>INVOLVEMENT IN RTSC3</scope>
    <scope>VARIANT RTSC3 THR-830</scope>
    <scope>CHARACTERIZATION OF VARIANT RTSC3 THR-830</scope>
</reference>
<dbReference type="EMBL" id="AF461052">
    <property type="protein sequence ID" value="AAL67806.2"/>
    <property type="molecule type" value="mRNA"/>
</dbReference>
<dbReference type="EMBL" id="AK024693">
    <property type="protein sequence ID" value="BAB14965.1"/>
    <property type="molecule type" value="mRNA"/>
</dbReference>
<dbReference type="EMBL" id="AK290286">
    <property type="protein sequence ID" value="BAF82975.1"/>
    <property type="molecule type" value="mRNA"/>
</dbReference>
<dbReference type="EMBL" id="BX537867">
    <property type="protein sequence ID" value="CAD97869.1"/>
    <property type="status" value="ALT_INIT"/>
    <property type="molecule type" value="mRNA"/>
</dbReference>
<dbReference type="EMBL" id="AL833428">
    <property type="protein sequence ID" value="CAH10399.1"/>
    <property type="molecule type" value="mRNA"/>
</dbReference>
<dbReference type="EMBL" id="BC014900">
    <property type="protein sequence ID" value="AAH14900.2"/>
    <property type="status" value="ALT_INIT"/>
    <property type="molecule type" value="mRNA"/>
</dbReference>
<dbReference type="EMBL" id="BC050464">
    <property type="protein sequence ID" value="AAH50464.1"/>
    <property type="molecule type" value="mRNA"/>
</dbReference>
<dbReference type="EMBL" id="BC058845">
    <property type="protein sequence ID" value="AAH58845.1"/>
    <property type="molecule type" value="mRNA"/>
</dbReference>
<dbReference type="EMBL" id="AL136744">
    <property type="protein sequence ID" value="CAB66678.1"/>
    <property type="molecule type" value="mRNA"/>
</dbReference>
<dbReference type="EMBL" id="AC002550">
    <property type="protein sequence ID" value="AAC05806.1"/>
    <property type="molecule type" value="Genomic_DNA"/>
</dbReference>
<dbReference type="CCDS" id="CCDS32397.3">
    <molecule id="Q7Z3J2-1"/>
</dbReference>
<dbReference type="RefSeq" id="NP_064710.4">
    <molecule id="Q7Z3J2-1"/>
    <property type="nucleotide sequence ID" value="NM_020314.5"/>
</dbReference>
<dbReference type="PDB" id="8ESE">
    <property type="method" value="X-ray"/>
    <property type="resolution" value="1.35 A"/>
    <property type="chains" value="X=16-38"/>
</dbReference>
<dbReference type="PDB" id="8P0V">
    <property type="method" value="EM"/>
    <property type="resolution" value="6.50 A"/>
    <property type="chains" value="O=1-963"/>
</dbReference>
<dbReference type="PDB" id="8P0X">
    <property type="method" value="EM"/>
    <property type="resolution" value="7.50 A"/>
    <property type="chains" value="O=1-963"/>
</dbReference>
<dbReference type="PDB" id="8SYM">
    <property type="method" value="EM"/>
    <property type="resolution" value="3.20 A"/>
    <property type="chains" value="A=1-963"/>
</dbReference>
<dbReference type="PDB" id="8SYN">
    <property type="method" value="EM"/>
    <property type="resolution" value="2.94 A"/>
    <property type="chains" value="A=1-963"/>
</dbReference>
<dbReference type="PDB" id="8SYO">
    <property type="method" value="EM"/>
    <property type="resolution" value="2.94 A"/>
    <property type="chains" value="A=1-963"/>
</dbReference>
<dbReference type="PDB" id="9AU7">
    <property type="method" value="EM"/>
    <property type="resolution" value="3.40 A"/>
    <property type="chains" value="A=1-963"/>
</dbReference>
<dbReference type="PDBsum" id="8ESE"/>
<dbReference type="PDBsum" id="8P0V"/>
<dbReference type="PDBsum" id="8P0X"/>
<dbReference type="PDBsum" id="8SYM"/>
<dbReference type="PDBsum" id="8SYN"/>
<dbReference type="PDBsum" id="8SYO"/>
<dbReference type="PDBsum" id="9AU7"/>
<dbReference type="EMDB" id="EMD-17339"/>
<dbReference type="EMDB" id="EMD-17341"/>
<dbReference type="EMDB" id="EMD-17342"/>
<dbReference type="EMDB" id="EMD-40884"/>
<dbReference type="EMDB" id="EMD-40885"/>
<dbReference type="EMDB" id="EMD-40886"/>
<dbReference type="EMDB" id="EMD-43872"/>
<dbReference type="EMDB" id="EMD-43873"/>
<dbReference type="SASBDB" id="Q7Z3J2"/>
<dbReference type="SMR" id="Q7Z3J2"/>
<dbReference type="BioGRID" id="121329">
    <property type="interactions" value="46"/>
</dbReference>
<dbReference type="ComplexPortal" id="CPX-2211">
    <property type="entry name" value="Commander complex"/>
</dbReference>
<dbReference type="CORUM" id="Q7Z3J2"/>
<dbReference type="FunCoup" id="Q7Z3J2">
    <property type="interactions" value="2981"/>
</dbReference>
<dbReference type="IntAct" id="Q7Z3J2">
    <property type="interactions" value="31"/>
</dbReference>
<dbReference type="MINT" id="Q7Z3J2"/>
<dbReference type="STRING" id="9606.ENSP00000251143"/>
<dbReference type="GlyGen" id="Q7Z3J2">
    <property type="glycosylation" value="1 site, 1 O-linked glycan (1 site)"/>
</dbReference>
<dbReference type="iPTMnet" id="Q7Z3J2"/>
<dbReference type="PhosphoSitePlus" id="Q7Z3J2"/>
<dbReference type="BioMuta" id="C16orf62"/>
<dbReference type="jPOST" id="Q7Z3J2"/>
<dbReference type="MassIVE" id="Q7Z3J2"/>
<dbReference type="PaxDb" id="9606-ENSP00000251143"/>
<dbReference type="PeptideAtlas" id="Q7Z3J2"/>
<dbReference type="ProteomicsDB" id="69055">
    <molecule id="Q7Z3J2-1"/>
</dbReference>
<dbReference type="ProteomicsDB" id="69056">
    <molecule id="Q7Z3J2-2"/>
</dbReference>
<dbReference type="Pumba" id="Q7Z3J2"/>
<dbReference type="Antibodypedia" id="52453">
    <property type="antibodies" value="48 antibodies from 14 providers"/>
</dbReference>
<dbReference type="DNASU" id="57020"/>
<dbReference type="Ensembl" id="ENST00000417362.7">
    <molecule id="Q7Z3J2-1"/>
    <property type="protein sequence ID" value="ENSP00000395973.3"/>
    <property type="gene ID" value="ENSG00000103544.17"/>
</dbReference>
<dbReference type="GeneID" id="57020"/>
<dbReference type="KEGG" id="hsa:57020"/>
<dbReference type="MANE-Select" id="ENST00000417362.7">
    <property type="protein sequence ID" value="ENSP00000395973.3"/>
    <property type="RefSeq nucleotide sequence ID" value="NM_020314.7"/>
    <property type="RefSeq protein sequence ID" value="NP_064710.5"/>
</dbReference>
<dbReference type="UCSC" id="uc059rnn.1">
    <molecule id="Q7Z3J2-1"/>
    <property type="organism name" value="human"/>
</dbReference>
<dbReference type="AGR" id="HGNC:24641"/>
<dbReference type="CTD" id="57020"/>
<dbReference type="DisGeNET" id="57020"/>
<dbReference type="GeneCards" id="VPS35L"/>
<dbReference type="HGNC" id="HGNC:24641">
    <property type="gene designation" value="VPS35L"/>
</dbReference>
<dbReference type="HPA" id="ENSG00000103544">
    <property type="expression patterns" value="Low tissue specificity"/>
</dbReference>
<dbReference type="MalaCards" id="VPS35L"/>
<dbReference type="MIM" id="618981">
    <property type="type" value="gene"/>
</dbReference>
<dbReference type="MIM" id="619135">
    <property type="type" value="phenotype"/>
</dbReference>
<dbReference type="neXtProt" id="NX_Q7Z3J2"/>
<dbReference type="OpenTargets" id="ENSG00000103544"/>
<dbReference type="Orphanet" id="7">
    <property type="disease" value="3C syndrome"/>
</dbReference>
<dbReference type="PharmGKB" id="PA162378300"/>
<dbReference type="VEuPathDB" id="HostDB:ENSG00000103544"/>
<dbReference type="eggNOG" id="KOG3682">
    <property type="taxonomic scope" value="Eukaryota"/>
</dbReference>
<dbReference type="GeneTree" id="ENSGT00390000011343"/>
<dbReference type="InParanoid" id="Q7Z3J2"/>
<dbReference type="OrthoDB" id="1734063at2759"/>
<dbReference type="PAN-GO" id="Q7Z3J2">
    <property type="GO annotations" value="2 GO annotations based on evolutionary models"/>
</dbReference>
<dbReference type="PhylomeDB" id="Q7Z3J2"/>
<dbReference type="PathwayCommons" id="Q7Z3J2"/>
<dbReference type="Reactome" id="R-HSA-6798695">
    <property type="pathway name" value="Neutrophil degranulation"/>
</dbReference>
<dbReference type="SignaLink" id="Q7Z3J2"/>
<dbReference type="BioGRID-ORCS" id="57020">
    <property type="hits" value="28 hits in 1150 CRISPR screens"/>
</dbReference>
<dbReference type="ChiTaRS" id="VPS35L">
    <property type="organism name" value="human"/>
</dbReference>
<dbReference type="GenomeRNAi" id="57020"/>
<dbReference type="Pharos" id="Q7Z3J2">
    <property type="development level" value="Tdark"/>
</dbReference>
<dbReference type="PRO" id="PR:Q7Z3J2"/>
<dbReference type="Proteomes" id="UP000005640">
    <property type="component" value="Chromosome 16"/>
</dbReference>
<dbReference type="RNAct" id="Q7Z3J2">
    <property type="molecule type" value="protein"/>
</dbReference>
<dbReference type="Bgee" id="ENSG00000103544">
    <property type="expression patterns" value="Expressed in buccal mucosa cell and 195 other cell types or tissues"/>
</dbReference>
<dbReference type="ExpressionAtlas" id="Q7Z3J2">
    <property type="expression patterns" value="baseline and differential"/>
</dbReference>
<dbReference type="GO" id="GO:0005768">
    <property type="term" value="C:endosome"/>
    <property type="evidence" value="ECO:0000314"/>
    <property type="project" value="UniProtKB"/>
</dbReference>
<dbReference type="GO" id="GO:0101003">
    <property type="term" value="C:ficolin-1-rich granule membrane"/>
    <property type="evidence" value="ECO:0000304"/>
    <property type="project" value="Reactome"/>
</dbReference>
<dbReference type="GO" id="GO:0005886">
    <property type="term" value="C:plasma membrane"/>
    <property type="evidence" value="ECO:0000304"/>
    <property type="project" value="Reactome"/>
</dbReference>
<dbReference type="GO" id="GO:0032456">
    <property type="term" value="P:endocytic recycling"/>
    <property type="evidence" value="ECO:0000315"/>
    <property type="project" value="UniProtKB"/>
</dbReference>
<dbReference type="GO" id="GO:0006893">
    <property type="term" value="P:Golgi to plasma membrane transport"/>
    <property type="evidence" value="ECO:0000315"/>
    <property type="project" value="UniProtKB"/>
</dbReference>
<dbReference type="GO" id="GO:0015031">
    <property type="term" value="P:protein transport"/>
    <property type="evidence" value="ECO:0007669"/>
    <property type="project" value="UniProtKB-KW"/>
</dbReference>
<dbReference type="InterPro" id="IPR029705">
    <property type="entry name" value="VPS35L"/>
</dbReference>
<dbReference type="PANTHER" id="PTHR13673">
    <property type="entry name" value="ESOPHAGEAL CANCER ASSOCIATED PROTEIN"/>
    <property type="match status" value="1"/>
</dbReference>
<dbReference type="PANTHER" id="PTHR13673:SF0">
    <property type="entry name" value="VPS35 ENDOSOMAL PROTEIN-SORTING FACTOR-LIKE"/>
    <property type="match status" value="1"/>
</dbReference>
<name>VP35L_HUMAN</name>
<accession>Q7Z3J2</accession>
<accession>A8K2M1</accession>
<accession>O43329</accession>
<accession>Q69YI1</accession>
<accession>Q6PDA0</accession>
<accession>Q7L371</accession>
<accession>Q86W66</accession>
<accession>Q8WXA5</accession>
<accession>Q9H0L7</accession>
<accession>Q9H7C8</accession>
<keyword id="KW-0002">3D-structure</keyword>
<keyword id="KW-0025">Alternative splicing</keyword>
<keyword id="KW-0225">Disease variant</keyword>
<keyword id="KW-0967">Endosome</keyword>
<keyword id="KW-0472">Membrane</keyword>
<keyword id="KW-0597">Phosphoprotein</keyword>
<keyword id="KW-0653">Protein transport</keyword>
<keyword id="KW-1267">Proteomics identification</keyword>
<keyword id="KW-1185">Reference proteome</keyword>
<keyword id="KW-0812">Transmembrane</keyword>
<keyword id="KW-1133">Transmembrane helix</keyword>
<keyword id="KW-0813">Transport</keyword>
<comment type="function">
    <text evidence="4 5">Acts as a component of the retriever complex. The retriever complex is a heterotrimeric complex related to retromer cargo-selective complex (CSC) and essential for retromer-independent retrieval and recycling of numerous cargos such as integrin alpha-5/beta-1 (ITGA5:ITGB1) (PubMed:28892079). The recruitment of the retriever complex to the endosomal membrane involves CCC and WASH complexes (PubMed:28892079). In the endosomes, drives the retrieval and recycling of NxxY-motif-containing cargo proteins by coupling to SNX17, a cargo essential for the homeostatic maintenance of numerous cell surface proteins associated with processes that include cell migration, cell adhesion, nutrient supply and cell signaling (PubMed:28892079). Involved in copper-dependent ATP7A trafficking between the trans-Golgi network and vesicles in the cell periphery; the function is proposed to depend on its association with the CCC complex and cooperation with the WASH complex on early endosomes. Seems not to be required for CCC complex stability (PubMed:25355947).</text>
</comment>
<comment type="function">
    <text evidence="5">(Microbial infection) The heterotrimeric retriever complex, in collaboration with the CCC complex, mediates the exit of human papillomavirus to the cell surface.</text>
</comment>
<comment type="subunit">
    <text evidence="4 5 6">Component of the heterotrimeric retriever complex formed by VPS26C, VPS29 and VPS35L (PubMed:28892079). Interacts with VPS29 (PubMed:31712251). Interacts with COMMD1, CCDC93 and CCDC22; associates with the CCC (COMMD/CCDC22/CCDC93) complex which contains at least COMMD1 (and possibly other COMM domain-containing proteins), CCDC22 and CCDC93 (PubMed:25355947, PubMed:28892079). Interacts with WASHC1, WASHC2A and WASHC2C (PubMed:25355947). Interacts with SNX17 and SNX31 (PubMed:28892079).</text>
</comment>
<comment type="interaction">
    <interactant intactId="EBI-11080070">
        <id>Q7Z3J2</id>
    </interactant>
    <interactant intactId="EBI-7207091">
        <id>O14972</id>
        <label>VPS26C</label>
    </interactant>
    <organismsDiffer>false</organismsDiffer>
    <experiments>9</experiments>
</comment>
<comment type="interaction">
    <interactant intactId="EBI-11080070">
        <id>Q7Z3J2</id>
    </interactant>
    <interactant intactId="EBI-718596">
        <id>Q9UBQ0</id>
        <label>VPS29</label>
    </interactant>
    <organismsDiffer>false</organismsDiffer>
    <experiments>15</experiments>
</comment>
<comment type="subcellular location">
    <subcellularLocation>
        <location evidence="1">Membrane</location>
        <topology evidence="1">Single-pass membrane protein</topology>
    </subcellularLocation>
    <subcellularLocation>
        <location evidence="4 5">Endosome</location>
    </subcellularLocation>
    <text evidence="5">Endosome location is dependent of the association with the CCC and WASH complexes.</text>
</comment>
<comment type="alternative products">
    <event type="alternative splicing"/>
    <isoform>
        <id>Q7Z3J2-1</id>
        <name>1</name>
        <sequence type="displayed"/>
    </isoform>
    <isoform>
        <id>Q7Z3J2-2</id>
        <name>2</name>
        <sequence type="described" ref="VSP_029536 VSP_029537 VSP_029538"/>
    </isoform>
</comment>
<comment type="disease" evidence="6">
    <disease id="DI-05996">
        <name>Ritscher-Schinzel syndrome 3</name>
        <acronym>RTSC3</acronym>
        <description>A form of Ritscher-Schinzel syndrome, a developmental malformation syndrome characterized by cerebellar brain malformations, congenital heart defects, and craniofacial abnormalities. RTSC3 is an autosomal recessive form. Affected individuals show cranio-cerebello-cardiac anomalies, coloboma, microphthalmia, chondrodysplasia punctata, complicated skeletal malformations, periventricular nodular heterotopia and proteinuria.</description>
        <dbReference type="MIM" id="619135"/>
    </disease>
    <text>The disease may be caused by variants affecting the gene represented in this entry.</text>
</comment>
<comment type="similarity">
    <text evidence="8">Belongs to the VPS35L family.</text>
</comment>
<comment type="sequence caution" evidence="8">
    <conflict type="erroneous initiation">
        <sequence resource="EMBL-CDS" id="AAH14900"/>
    </conflict>
    <text>Extended N-terminus.</text>
</comment>
<comment type="sequence caution" evidence="8">
    <conflict type="erroneous initiation">
        <sequence resource="EMBL-CDS" id="CAD97869"/>
    </conflict>
    <text>Truncated N-terminus.</text>
</comment>
<feature type="chain" id="PRO_0000311352" description="VPS35 endosomal protein-sorting factor-like">
    <location>
        <begin position="1"/>
        <end position="963"/>
    </location>
</feature>
<feature type="transmembrane region" description="Helical" evidence="1">
    <location>
        <begin position="703"/>
        <end position="719"/>
    </location>
</feature>
<feature type="region of interest" description="Disordered" evidence="2">
    <location>
        <begin position="43"/>
        <end position="69"/>
    </location>
</feature>
<feature type="compositionally biased region" description="Low complexity" evidence="2">
    <location>
        <begin position="53"/>
        <end position="69"/>
    </location>
</feature>
<feature type="modified residue" description="Phosphoserine" evidence="10">
    <location>
        <position position="265"/>
    </location>
</feature>
<feature type="splice variant" id="VSP_029536" description="In isoform 2." evidence="7">
    <location>
        <begin position="1"/>
        <end position="122"/>
    </location>
</feature>
<feature type="splice variant" id="VSP_029537" description="In isoform 2." evidence="7">
    <original>EILARYTTTEKLSINLFMGSEK</original>
    <variation>MPPLGVLVHEKSHLCDVNSFCL</variation>
    <location>
        <begin position="123"/>
        <end position="144"/>
    </location>
</feature>
<feature type="splice variant" id="VSP_029538" description="In isoform 2." evidence="7">
    <original>CSKLLSDTSVIQFYPSKFVLITDILDTFGK</original>
    <variation>EE</variation>
    <location>
        <begin position="214"/>
        <end position="243"/>
    </location>
</feature>
<feature type="sequence variant" id="VAR_037230" description="In dbSNP:rs17854969." evidence="3">
    <original>Y</original>
    <variation>C</variation>
    <location>
        <position position="32"/>
    </location>
</feature>
<feature type="sequence variant" id="VAR_037231" description="In dbSNP:rs7206637.">
    <original>N</original>
    <variation>I</variation>
    <location>
        <position position="186"/>
    </location>
</feature>
<feature type="sequence variant" id="VAR_037232" description="In dbSNP:rs17854970." evidence="3">
    <original>A</original>
    <variation>V</variation>
    <location>
        <position position="506"/>
    </location>
</feature>
<feature type="sequence variant" id="VAR_085197" description="In RTSC3; does not interact with VPS29; dbSNP:rs747119819." evidence="6">
    <original>A</original>
    <variation>T</variation>
    <location>
        <position position="830"/>
    </location>
</feature>
<feature type="sequence conflict" description="In Ref. 3; CAH10399." evidence="8" ref="3">
    <original>F</original>
    <variation>S</variation>
    <location>
        <position position="168"/>
    </location>
</feature>
<feature type="sequence conflict" description="In Ref. 1; AAL67806." evidence="8" ref="1">
    <original>C</original>
    <variation>G</variation>
    <location>
        <position position="340"/>
    </location>
</feature>
<feature type="sequence conflict" description="In Ref. 3; CAD97869." evidence="8" ref="3">
    <original>I</original>
    <variation>V</variation>
    <location>
        <position position="675"/>
    </location>
</feature>
<feature type="helix" evidence="11">
    <location>
        <begin position="13"/>
        <end position="20"/>
    </location>
</feature>
<feature type="helix" evidence="11">
    <location>
        <begin position="117"/>
        <end position="127"/>
    </location>
</feature>
<feature type="helix" evidence="11">
    <location>
        <begin position="181"/>
        <end position="200"/>
    </location>
</feature>
<feature type="helix" evidence="11">
    <location>
        <begin position="204"/>
        <end position="217"/>
    </location>
</feature>
<feature type="helix" evidence="11">
    <location>
        <begin position="224"/>
        <end position="226"/>
    </location>
</feature>
<feature type="helix" evidence="11">
    <location>
        <begin position="227"/>
        <end position="253"/>
    </location>
</feature>
<feature type="turn" evidence="12">
    <location>
        <begin position="266"/>
        <end position="268"/>
    </location>
</feature>
<feature type="helix" evidence="11">
    <location>
        <begin position="271"/>
        <end position="285"/>
    </location>
</feature>
<feature type="helix" evidence="11">
    <location>
        <begin position="290"/>
        <end position="299"/>
    </location>
</feature>
<feature type="helix" evidence="11">
    <location>
        <begin position="301"/>
        <end position="306"/>
    </location>
</feature>
<feature type="helix" evidence="11">
    <location>
        <begin position="311"/>
        <end position="322"/>
    </location>
</feature>
<feature type="helix" evidence="11">
    <location>
        <begin position="323"/>
        <end position="325"/>
    </location>
</feature>
<feature type="helix" evidence="11">
    <location>
        <begin position="329"/>
        <end position="346"/>
    </location>
</feature>
<feature type="helix" evidence="11">
    <location>
        <begin position="351"/>
        <end position="364"/>
    </location>
</feature>
<feature type="helix" evidence="11">
    <location>
        <begin position="365"/>
        <end position="367"/>
    </location>
</feature>
<feature type="helix" evidence="11">
    <location>
        <begin position="371"/>
        <end position="380"/>
    </location>
</feature>
<feature type="helix" evidence="11">
    <location>
        <begin position="384"/>
        <end position="387"/>
    </location>
</feature>
<feature type="helix" evidence="11">
    <location>
        <begin position="388"/>
        <end position="390"/>
    </location>
</feature>
<feature type="helix" evidence="11">
    <location>
        <begin position="392"/>
        <end position="402"/>
    </location>
</feature>
<feature type="turn" evidence="11">
    <location>
        <begin position="403"/>
        <end position="405"/>
    </location>
</feature>
<feature type="helix" evidence="11">
    <location>
        <begin position="408"/>
        <end position="419"/>
    </location>
</feature>
<feature type="strand" evidence="11">
    <location>
        <begin position="421"/>
        <end position="423"/>
    </location>
</feature>
<feature type="helix" evidence="11">
    <location>
        <begin position="425"/>
        <end position="434"/>
    </location>
</feature>
<feature type="helix" evidence="11">
    <location>
        <begin position="437"/>
        <end position="442"/>
    </location>
</feature>
<feature type="helix" evidence="11">
    <location>
        <begin position="444"/>
        <end position="452"/>
    </location>
</feature>
<feature type="strand" evidence="11">
    <location>
        <begin position="456"/>
        <end position="459"/>
    </location>
</feature>
<feature type="helix" evidence="11">
    <location>
        <begin position="461"/>
        <end position="472"/>
    </location>
</feature>
<feature type="helix" evidence="11">
    <location>
        <begin position="479"/>
        <end position="481"/>
    </location>
</feature>
<feature type="helix" evidence="11">
    <location>
        <begin position="482"/>
        <end position="493"/>
    </location>
</feature>
<feature type="helix" evidence="11">
    <location>
        <begin position="499"/>
        <end position="516"/>
    </location>
</feature>
<feature type="helix" evidence="11">
    <location>
        <begin position="519"/>
        <end position="533"/>
    </location>
</feature>
<feature type="turn" evidence="11">
    <location>
        <begin position="534"/>
        <end position="537"/>
    </location>
</feature>
<feature type="helix" evidence="11">
    <location>
        <begin position="538"/>
        <end position="541"/>
    </location>
</feature>
<feature type="helix" evidence="11">
    <location>
        <begin position="543"/>
        <end position="555"/>
    </location>
</feature>
<feature type="helix" evidence="11">
    <location>
        <begin position="560"/>
        <end position="563"/>
    </location>
</feature>
<feature type="helix" evidence="11">
    <location>
        <begin position="569"/>
        <end position="575"/>
    </location>
</feature>
<feature type="helix" evidence="11">
    <location>
        <begin position="579"/>
        <end position="595"/>
    </location>
</feature>
<feature type="helix" evidence="11">
    <location>
        <begin position="604"/>
        <end position="618"/>
    </location>
</feature>
<feature type="helix" evidence="11">
    <location>
        <begin position="627"/>
        <end position="642"/>
    </location>
</feature>
<feature type="helix" evidence="11">
    <location>
        <begin position="650"/>
        <end position="663"/>
    </location>
</feature>
<feature type="helix" evidence="11">
    <location>
        <begin position="668"/>
        <end position="688"/>
    </location>
</feature>
<feature type="turn" evidence="11">
    <location>
        <begin position="689"/>
        <end position="691"/>
    </location>
</feature>
<feature type="helix" evidence="11">
    <location>
        <begin position="695"/>
        <end position="711"/>
    </location>
</feature>
<feature type="helix" evidence="11">
    <location>
        <begin position="712"/>
        <end position="714"/>
    </location>
</feature>
<feature type="helix" evidence="11">
    <location>
        <begin position="718"/>
        <end position="733"/>
    </location>
</feature>
<feature type="turn" evidence="11">
    <location>
        <begin position="734"/>
        <end position="736"/>
    </location>
</feature>
<feature type="helix" evidence="11">
    <location>
        <begin position="739"/>
        <end position="751"/>
    </location>
</feature>
<feature type="helix" evidence="11">
    <location>
        <begin position="752"/>
        <end position="754"/>
    </location>
</feature>
<feature type="strand" evidence="11">
    <location>
        <begin position="757"/>
        <end position="761"/>
    </location>
</feature>
<feature type="strand" evidence="11">
    <location>
        <begin position="764"/>
        <end position="768"/>
    </location>
</feature>
<feature type="helix" evidence="11">
    <location>
        <begin position="769"/>
        <end position="783"/>
    </location>
</feature>
<feature type="helix" evidence="11">
    <location>
        <begin position="796"/>
        <end position="807"/>
    </location>
</feature>
<feature type="helix" evidence="11">
    <location>
        <begin position="816"/>
        <end position="831"/>
    </location>
</feature>
<feature type="strand" evidence="11">
    <location>
        <begin position="833"/>
        <end position="835"/>
    </location>
</feature>
<feature type="helix" evidence="11">
    <location>
        <begin position="846"/>
        <end position="849"/>
    </location>
</feature>
<feature type="helix" evidence="11">
    <location>
        <begin position="854"/>
        <end position="880"/>
    </location>
</feature>
<feature type="helix" evidence="11">
    <location>
        <begin position="884"/>
        <end position="900"/>
    </location>
</feature>
<feature type="helix" evidence="11">
    <location>
        <begin position="907"/>
        <end position="922"/>
    </location>
</feature>
<protein>
    <recommendedName>
        <fullName evidence="8">VPS35 endosomal protein-sorting factor-like</fullName>
    </recommendedName>
    <alternativeName>
        <fullName>Esophageal cancer-associated protein</fullName>
    </alternativeName>
</protein>
<proteinExistence type="evidence at protein level"/>
<organism>
    <name type="scientific">Homo sapiens</name>
    <name type="common">Human</name>
    <dbReference type="NCBI Taxonomy" id="9606"/>
    <lineage>
        <taxon>Eukaryota</taxon>
        <taxon>Metazoa</taxon>
        <taxon>Chordata</taxon>
        <taxon>Craniata</taxon>
        <taxon>Vertebrata</taxon>
        <taxon>Euteleostomi</taxon>
        <taxon>Mammalia</taxon>
        <taxon>Eutheria</taxon>
        <taxon>Euarchontoglires</taxon>
        <taxon>Primates</taxon>
        <taxon>Haplorrhini</taxon>
        <taxon>Catarrhini</taxon>
        <taxon>Hominidae</taxon>
        <taxon>Homo</taxon>
    </lineage>
</organism>
<evidence type="ECO:0000255" key="1"/>
<evidence type="ECO:0000256" key="2">
    <source>
        <dbReference type="SAM" id="MobiDB-lite"/>
    </source>
</evidence>
<evidence type="ECO:0000269" key="3">
    <source>
    </source>
</evidence>
<evidence type="ECO:0000269" key="4">
    <source>
    </source>
</evidence>
<evidence type="ECO:0000269" key="5">
    <source>
    </source>
</evidence>
<evidence type="ECO:0000269" key="6">
    <source>
    </source>
</evidence>
<evidence type="ECO:0000303" key="7">
    <source ref="1"/>
</evidence>
<evidence type="ECO:0000305" key="8"/>
<evidence type="ECO:0000312" key="9">
    <source>
        <dbReference type="HGNC" id="HGNC:24641"/>
    </source>
</evidence>
<evidence type="ECO:0007744" key="10">
    <source>
    </source>
</evidence>
<evidence type="ECO:0007829" key="11">
    <source>
        <dbReference type="PDB" id="8SYN"/>
    </source>
</evidence>
<evidence type="ECO:0007829" key="12">
    <source>
        <dbReference type="PDB" id="9AU7"/>
    </source>
</evidence>